<sequence>MRSKKMTHGLEKAPHRSLLYALGLTREELSRPLVGVVNSANEVVPGHIHLHTIAEAVKAGVRAAGGTPMEFPAIAVCDGLAMNHEGMRFSLPSREIIADSIEIMATAHPFDALVFIPNCDKSVPGMLMAMLRMNVPSILISGGPMMAGTGNGKAADLITVFEGVGMVRQGRMTEDELEQLSETACPGCGSCAGMFTANSMNCLSETIGLALPGNGTTPANSAARVRLAKHAGMRVMELLERDIKPRDIVTEKAVANAVAADMALGCSTNTVLHLPAVFAEAGLDLTLGIFDEVSRKTPNLCKLSPAGDQHIQDLHRAGGIPAVMAELDKAGRIHRDALTVTGRTVGENLDALGAAVRDHDVIRPMEKPYSPQGGIAILYGSLAPEGAVVKQSAVAPEMMQRTARARVFESEEAAFEAIMAQRIEKGDAIIIRYEGPKGGPGMREMLSPTAAIAGIGLGADVALITDGRFSGGTRGAAIGHVSPEAADGGPIGLVREGDMIEIDIPARKLDLLVDEAEMERRRAAFTPVVKEVTSPLLKRYSRLVTSAANGAVYKR</sequence>
<reference key="1">
    <citation type="journal article" date="2011" name="J. Bacteriol.">
        <title>Complete genome sequence and updated annotation of Desulfovibrio alaskensis G20.</title>
        <authorList>
            <person name="Hauser L.J."/>
            <person name="Land M.L."/>
            <person name="Brown S.D."/>
            <person name="Larimer F."/>
            <person name="Keller K.L."/>
            <person name="Rapp-Giles B.J."/>
            <person name="Price M.N."/>
            <person name="Lin M."/>
            <person name="Bruce D.C."/>
            <person name="Detter J.C."/>
            <person name="Tapia R."/>
            <person name="Han C.S."/>
            <person name="Goodwin L.A."/>
            <person name="Cheng J.F."/>
            <person name="Pitluck S."/>
            <person name="Copeland A."/>
            <person name="Lucas S."/>
            <person name="Nolan M."/>
            <person name="Lapidus A.L."/>
            <person name="Palumbo A.V."/>
            <person name="Wall J.D."/>
        </authorList>
    </citation>
    <scope>NUCLEOTIDE SEQUENCE [LARGE SCALE GENOMIC DNA]</scope>
    <source>
        <strain>ATCC BAA-1058 / DSM 17464 / G20</strain>
    </source>
</reference>
<protein>
    <recommendedName>
        <fullName evidence="1">Dihydroxy-acid dehydratase</fullName>
        <shortName evidence="1">DAD</shortName>
        <ecNumber evidence="1">4.2.1.9</ecNumber>
    </recommendedName>
</protein>
<evidence type="ECO:0000255" key="1">
    <source>
        <dbReference type="HAMAP-Rule" id="MF_00012"/>
    </source>
</evidence>
<proteinExistence type="inferred from homology"/>
<comment type="function">
    <text evidence="1">Functions in the biosynthesis of branched-chain amino acids. Catalyzes the dehydration of (2R,3R)-2,3-dihydroxy-3-methylpentanoate (2,3-dihydroxy-3-methylvalerate) into 2-oxo-3-methylpentanoate (2-oxo-3-methylvalerate) and of (2R)-2,3-dihydroxy-3-methylbutanoate (2,3-dihydroxyisovalerate) into 2-oxo-3-methylbutanoate (2-oxoisovalerate), the penultimate precursor to L-isoleucine and L-valine, respectively.</text>
</comment>
<comment type="catalytic activity">
    <reaction evidence="1">
        <text>(2R)-2,3-dihydroxy-3-methylbutanoate = 3-methyl-2-oxobutanoate + H2O</text>
        <dbReference type="Rhea" id="RHEA:24809"/>
        <dbReference type="ChEBI" id="CHEBI:11851"/>
        <dbReference type="ChEBI" id="CHEBI:15377"/>
        <dbReference type="ChEBI" id="CHEBI:49072"/>
        <dbReference type="EC" id="4.2.1.9"/>
    </reaction>
    <physiologicalReaction direction="left-to-right" evidence="1">
        <dbReference type="Rhea" id="RHEA:24810"/>
    </physiologicalReaction>
</comment>
<comment type="catalytic activity">
    <reaction evidence="1">
        <text>(2R,3R)-2,3-dihydroxy-3-methylpentanoate = (S)-3-methyl-2-oxopentanoate + H2O</text>
        <dbReference type="Rhea" id="RHEA:27694"/>
        <dbReference type="ChEBI" id="CHEBI:15377"/>
        <dbReference type="ChEBI" id="CHEBI:35146"/>
        <dbReference type="ChEBI" id="CHEBI:49258"/>
        <dbReference type="EC" id="4.2.1.9"/>
    </reaction>
    <physiologicalReaction direction="left-to-right" evidence="1">
        <dbReference type="Rhea" id="RHEA:27695"/>
    </physiologicalReaction>
</comment>
<comment type="cofactor">
    <cofactor evidence="1">
        <name>[2Fe-2S] cluster</name>
        <dbReference type="ChEBI" id="CHEBI:190135"/>
    </cofactor>
    <text evidence="1">Binds 1 [2Fe-2S] cluster per subunit. This cluster acts as a Lewis acid cofactor.</text>
</comment>
<comment type="cofactor">
    <cofactor evidence="1">
        <name>Mg(2+)</name>
        <dbReference type="ChEBI" id="CHEBI:18420"/>
    </cofactor>
</comment>
<comment type="pathway">
    <text evidence="1">Amino-acid biosynthesis; L-isoleucine biosynthesis; L-isoleucine from 2-oxobutanoate: step 3/4.</text>
</comment>
<comment type="pathway">
    <text evidence="1">Amino-acid biosynthesis; L-valine biosynthesis; L-valine from pyruvate: step 3/4.</text>
</comment>
<comment type="subunit">
    <text evidence="1">Homodimer.</text>
</comment>
<comment type="similarity">
    <text evidence="1">Belongs to the IlvD/Edd family.</text>
</comment>
<feature type="chain" id="PRO_0000225389" description="Dihydroxy-acid dehydratase">
    <location>
        <begin position="1"/>
        <end position="555"/>
    </location>
</feature>
<feature type="active site" description="Proton acceptor" evidence="1">
    <location>
        <position position="470"/>
    </location>
</feature>
<feature type="binding site" evidence="1">
    <location>
        <position position="78"/>
    </location>
    <ligand>
        <name>Mg(2+)</name>
        <dbReference type="ChEBI" id="CHEBI:18420"/>
    </ligand>
</feature>
<feature type="binding site" evidence="1">
    <location>
        <position position="119"/>
    </location>
    <ligand>
        <name>[2Fe-2S] cluster</name>
        <dbReference type="ChEBI" id="CHEBI:190135"/>
    </ligand>
</feature>
<feature type="binding site" evidence="1">
    <location>
        <position position="120"/>
    </location>
    <ligand>
        <name>Mg(2+)</name>
        <dbReference type="ChEBI" id="CHEBI:18420"/>
    </ligand>
</feature>
<feature type="binding site" description="via carbamate group" evidence="1">
    <location>
        <position position="121"/>
    </location>
    <ligand>
        <name>Mg(2+)</name>
        <dbReference type="ChEBI" id="CHEBI:18420"/>
    </ligand>
</feature>
<feature type="binding site" evidence="1">
    <location>
        <position position="191"/>
    </location>
    <ligand>
        <name>[2Fe-2S] cluster</name>
        <dbReference type="ChEBI" id="CHEBI:190135"/>
    </ligand>
</feature>
<feature type="binding site" evidence="1">
    <location>
        <position position="444"/>
    </location>
    <ligand>
        <name>Mg(2+)</name>
        <dbReference type="ChEBI" id="CHEBI:18420"/>
    </ligand>
</feature>
<feature type="modified residue" description="N6-carboxylysine" evidence="1">
    <location>
        <position position="121"/>
    </location>
</feature>
<organism>
    <name type="scientific">Oleidesulfovibrio alaskensis (strain ATCC BAA-1058 / DSM 17464 / G20)</name>
    <name type="common">Desulfovibrio alaskensis</name>
    <dbReference type="NCBI Taxonomy" id="207559"/>
    <lineage>
        <taxon>Bacteria</taxon>
        <taxon>Pseudomonadati</taxon>
        <taxon>Thermodesulfobacteriota</taxon>
        <taxon>Desulfovibrionia</taxon>
        <taxon>Desulfovibrionales</taxon>
        <taxon>Desulfovibrionaceae</taxon>
        <taxon>Oleidesulfovibrio</taxon>
    </lineage>
</organism>
<gene>
    <name evidence="1" type="primary">ilvD</name>
    <name type="ordered locus">Dde_0116</name>
</gene>
<dbReference type="EC" id="4.2.1.9" evidence="1"/>
<dbReference type="EMBL" id="CP000112">
    <property type="protein sequence ID" value="ABB36917.1"/>
    <property type="molecule type" value="Genomic_DNA"/>
</dbReference>
<dbReference type="RefSeq" id="WP_011366291.1">
    <property type="nucleotide sequence ID" value="NC_007519.1"/>
</dbReference>
<dbReference type="SMR" id="Q317H9"/>
<dbReference type="STRING" id="207559.Dde_0116"/>
<dbReference type="KEGG" id="dde:Dde_0116"/>
<dbReference type="eggNOG" id="COG0129">
    <property type="taxonomic scope" value="Bacteria"/>
</dbReference>
<dbReference type="HOGENOM" id="CLU_014271_4_2_7"/>
<dbReference type="UniPathway" id="UPA00047">
    <property type="reaction ID" value="UER00057"/>
</dbReference>
<dbReference type="UniPathway" id="UPA00049">
    <property type="reaction ID" value="UER00061"/>
</dbReference>
<dbReference type="Proteomes" id="UP000002710">
    <property type="component" value="Chromosome"/>
</dbReference>
<dbReference type="GO" id="GO:0005829">
    <property type="term" value="C:cytosol"/>
    <property type="evidence" value="ECO:0007669"/>
    <property type="project" value="TreeGrafter"/>
</dbReference>
<dbReference type="GO" id="GO:0051537">
    <property type="term" value="F:2 iron, 2 sulfur cluster binding"/>
    <property type="evidence" value="ECO:0007669"/>
    <property type="project" value="UniProtKB-UniRule"/>
</dbReference>
<dbReference type="GO" id="GO:0004160">
    <property type="term" value="F:dihydroxy-acid dehydratase activity"/>
    <property type="evidence" value="ECO:0007669"/>
    <property type="project" value="UniProtKB-UniRule"/>
</dbReference>
<dbReference type="GO" id="GO:0000287">
    <property type="term" value="F:magnesium ion binding"/>
    <property type="evidence" value="ECO:0007669"/>
    <property type="project" value="UniProtKB-UniRule"/>
</dbReference>
<dbReference type="GO" id="GO:0009097">
    <property type="term" value="P:isoleucine biosynthetic process"/>
    <property type="evidence" value="ECO:0007669"/>
    <property type="project" value="UniProtKB-UniRule"/>
</dbReference>
<dbReference type="GO" id="GO:0009099">
    <property type="term" value="P:L-valine biosynthetic process"/>
    <property type="evidence" value="ECO:0007669"/>
    <property type="project" value="UniProtKB-UniRule"/>
</dbReference>
<dbReference type="FunFam" id="3.50.30.80:FF:000001">
    <property type="entry name" value="Dihydroxy-acid dehydratase"/>
    <property type="match status" value="1"/>
</dbReference>
<dbReference type="Gene3D" id="3.50.30.80">
    <property type="entry name" value="IlvD/EDD C-terminal domain-like"/>
    <property type="match status" value="1"/>
</dbReference>
<dbReference type="HAMAP" id="MF_00012">
    <property type="entry name" value="IlvD"/>
    <property type="match status" value="1"/>
</dbReference>
<dbReference type="InterPro" id="IPR042096">
    <property type="entry name" value="Dihydro-acid_dehy_C"/>
</dbReference>
<dbReference type="InterPro" id="IPR004404">
    <property type="entry name" value="DihydroxyA_deHydtase"/>
</dbReference>
<dbReference type="InterPro" id="IPR020558">
    <property type="entry name" value="DiOHA_6PGluconate_deHydtase_CS"/>
</dbReference>
<dbReference type="InterPro" id="IPR056740">
    <property type="entry name" value="ILV_EDD_C"/>
</dbReference>
<dbReference type="InterPro" id="IPR000581">
    <property type="entry name" value="ILV_EDD_N"/>
</dbReference>
<dbReference type="InterPro" id="IPR037237">
    <property type="entry name" value="IlvD/EDD_N"/>
</dbReference>
<dbReference type="NCBIfam" id="TIGR00110">
    <property type="entry name" value="ilvD"/>
    <property type="match status" value="1"/>
</dbReference>
<dbReference type="NCBIfam" id="NF002068">
    <property type="entry name" value="PRK00911.1"/>
    <property type="match status" value="1"/>
</dbReference>
<dbReference type="PANTHER" id="PTHR43661">
    <property type="entry name" value="D-XYLONATE DEHYDRATASE"/>
    <property type="match status" value="1"/>
</dbReference>
<dbReference type="PANTHER" id="PTHR43661:SF3">
    <property type="entry name" value="D-XYLONATE DEHYDRATASE YAGF-RELATED"/>
    <property type="match status" value="1"/>
</dbReference>
<dbReference type="Pfam" id="PF24877">
    <property type="entry name" value="ILV_EDD_C"/>
    <property type="match status" value="1"/>
</dbReference>
<dbReference type="Pfam" id="PF00920">
    <property type="entry name" value="ILVD_EDD_N"/>
    <property type="match status" value="1"/>
</dbReference>
<dbReference type="SUPFAM" id="SSF143975">
    <property type="entry name" value="IlvD/EDD N-terminal domain-like"/>
    <property type="match status" value="1"/>
</dbReference>
<dbReference type="SUPFAM" id="SSF52016">
    <property type="entry name" value="LeuD/IlvD-like"/>
    <property type="match status" value="1"/>
</dbReference>
<dbReference type="PROSITE" id="PS00886">
    <property type="entry name" value="ILVD_EDD_1"/>
    <property type="match status" value="1"/>
</dbReference>
<dbReference type="PROSITE" id="PS00887">
    <property type="entry name" value="ILVD_EDD_2"/>
    <property type="match status" value="1"/>
</dbReference>
<accession>Q317H9</accession>
<name>ILVD_OLEA2</name>
<keyword id="KW-0001">2Fe-2S</keyword>
<keyword id="KW-0028">Amino-acid biosynthesis</keyword>
<keyword id="KW-0100">Branched-chain amino acid biosynthesis</keyword>
<keyword id="KW-0408">Iron</keyword>
<keyword id="KW-0411">Iron-sulfur</keyword>
<keyword id="KW-0456">Lyase</keyword>
<keyword id="KW-0460">Magnesium</keyword>
<keyword id="KW-0479">Metal-binding</keyword>
<keyword id="KW-1185">Reference proteome</keyword>